<evidence type="ECO:0000250" key="1">
    <source>
        <dbReference type="UniProtKB" id="P01966"/>
    </source>
</evidence>
<evidence type="ECO:0000255" key="2">
    <source>
        <dbReference type="PROSITE-ProRule" id="PRU00238"/>
    </source>
</evidence>
<evidence type="ECO:0000269" key="3">
    <source>
    </source>
</evidence>
<evidence type="ECO:0000303" key="4">
    <source>
    </source>
</evidence>
<evidence type="ECO:0000305" key="5"/>
<feature type="chain" id="PRO_0000052781" description="Hemoglobin subunit alpha-2">
    <location>
        <begin position="1" status="less than"/>
        <end position="137"/>
    </location>
</feature>
<feature type="domain" description="Globin" evidence="2">
    <location>
        <begin position="1"/>
        <end position="137"/>
    </location>
</feature>
<feature type="binding site" evidence="2">
    <location>
        <position position="54"/>
    </location>
    <ligand>
        <name>O2</name>
        <dbReference type="ChEBI" id="CHEBI:15379"/>
    </ligand>
</feature>
<feature type="binding site" description="proximal binding residue" evidence="2">
    <location>
        <position position="83"/>
    </location>
    <ligand>
        <name>heme b</name>
        <dbReference type="ChEBI" id="CHEBI:60344"/>
    </ligand>
    <ligandPart>
        <name>Fe</name>
        <dbReference type="ChEBI" id="CHEBI:18248"/>
    </ligandPart>
</feature>
<feature type="non-terminal residue" evidence="4">
    <location>
        <position position="1"/>
    </location>
</feature>
<name>HBA2_TELPE</name>
<protein>
    <recommendedName>
        <fullName>Hemoglobin subunit alpha-2</fullName>
    </recommendedName>
    <alternativeName>
        <fullName>Alpha-2-globin</fullName>
    </alternativeName>
    <alternativeName>
        <fullName>Hemoglobin alpha-2 chain</fullName>
    </alternativeName>
</protein>
<reference evidence="5" key="1">
    <citation type="journal article" date="2002" name="Am. J. Physiol.">
        <title>Novel mechanism for high-altitude adaptation in hemoglobin of the Andean frog Telmatobius peruvianus.</title>
        <authorList>
            <person name="Weber R.E."/>
            <person name="Ostojic H."/>
            <person name="Fago A."/>
            <person name="Dewilde S."/>
            <person name="Van Hauwaert M.-L."/>
            <person name="Moens L."/>
            <person name="Monge C."/>
        </authorList>
    </citation>
    <scope>PROTEIN SEQUENCE</scope>
</reference>
<keyword id="KW-0007">Acetylation</keyword>
<keyword id="KW-0903">Direct protein sequencing</keyword>
<keyword id="KW-0349">Heme</keyword>
<keyword id="KW-0408">Iron</keyword>
<keyword id="KW-0479">Metal-binding</keyword>
<keyword id="KW-0561">Oxygen transport</keyword>
<keyword id="KW-0813">Transport</keyword>
<proteinExistence type="evidence at protein level"/>
<dbReference type="SMR" id="P83113"/>
<dbReference type="GO" id="GO:0072562">
    <property type="term" value="C:blood microparticle"/>
    <property type="evidence" value="ECO:0007669"/>
    <property type="project" value="TreeGrafter"/>
</dbReference>
<dbReference type="GO" id="GO:0031838">
    <property type="term" value="C:haptoglobin-hemoglobin complex"/>
    <property type="evidence" value="ECO:0007669"/>
    <property type="project" value="TreeGrafter"/>
</dbReference>
<dbReference type="GO" id="GO:0005833">
    <property type="term" value="C:hemoglobin complex"/>
    <property type="evidence" value="ECO:0007669"/>
    <property type="project" value="InterPro"/>
</dbReference>
<dbReference type="GO" id="GO:0031720">
    <property type="term" value="F:haptoglobin binding"/>
    <property type="evidence" value="ECO:0007669"/>
    <property type="project" value="TreeGrafter"/>
</dbReference>
<dbReference type="GO" id="GO:0020037">
    <property type="term" value="F:heme binding"/>
    <property type="evidence" value="ECO:0007669"/>
    <property type="project" value="InterPro"/>
</dbReference>
<dbReference type="GO" id="GO:0046872">
    <property type="term" value="F:metal ion binding"/>
    <property type="evidence" value="ECO:0007669"/>
    <property type="project" value="UniProtKB-KW"/>
</dbReference>
<dbReference type="GO" id="GO:0043177">
    <property type="term" value="F:organic acid binding"/>
    <property type="evidence" value="ECO:0007669"/>
    <property type="project" value="TreeGrafter"/>
</dbReference>
<dbReference type="GO" id="GO:0019825">
    <property type="term" value="F:oxygen binding"/>
    <property type="evidence" value="ECO:0007669"/>
    <property type="project" value="InterPro"/>
</dbReference>
<dbReference type="GO" id="GO:0005344">
    <property type="term" value="F:oxygen carrier activity"/>
    <property type="evidence" value="ECO:0007669"/>
    <property type="project" value="UniProtKB-KW"/>
</dbReference>
<dbReference type="GO" id="GO:0004601">
    <property type="term" value="F:peroxidase activity"/>
    <property type="evidence" value="ECO:0007669"/>
    <property type="project" value="TreeGrafter"/>
</dbReference>
<dbReference type="GO" id="GO:0042744">
    <property type="term" value="P:hydrogen peroxide catabolic process"/>
    <property type="evidence" value="ECO:0007669"/>
    <property type="project" value="TreeGrafter"/>
</dbReference>
<dbReference type="CDD" id="cd08927">
    <property type="entry name" value="Hb-alpha-like"/>
    <property type="match status" value="1"/>
</dbReference>
<dbReference type="FunFam" id="1.10.490.10:FF:000002">
    <property type="entry name" value="Hemoglobin subunit alpha"/>
    <property type="match status" value="1"/>
</dbReference>
<dbReference type="Gene3D" id="1.10.490.10">
    <property type="entry name" value="Globins"/>
    <property type="match status" value="1"/>
</dbReference>
<dbReference type="InterPro" id="IPR000971">
    <property type="entry name" value="Globin"/>
</dbReference>
<dbReference type="InterPro" id="IPR009050">
    <property type="entry name" value="Globin-like_sf"/>
</dbReference>
<dbReference type="InterPro" id="IPR012292">
    <property type="entry name" value="Globin/Proto"/>
</dbReference>
<dbReference type="InterPro" id="IPR002338">
    <property type="entry name" value="Hemoglobin_a-typ"/>
</dbReference>
<dbReference type="InterPro" id="IPR050056">
    <property type="entry name" value="Hemoglobin_oxygen_transport"/>
</dbReference>
<dbReference type="PANTHER" id="PTHR11442">
    <property type="entry name" value="HEMOGLOBIN FAMILY MEMBER"/>
    <property type="match status" value="1"/>
</dbReference>
<dbReference type="PANTHER" id="PTHR11442:SF48">
    <property type="entry name" value="HEMOGLOBIN SUBUNIT ALPHA"/>
    <property type="match status" value="1"/>
</dbReference>
<dbReference type="Pfam" id="PF00042">
    <property type="entry name" value="Globin"/>
    <property type="match status" value="1"/>
</dbReference>
<dbReference type="PRINTS" id="PR00612">
    <property type="entry name" value="ALPHAHAEM"/>
</dbReference>
<dbReference type="SUPFAM" id="SSF46458">
    <property type="entry name" value="Globin-like"/>
    <property type="match status" value="1"/>
</dbReference>
<dbReference type="PROSITE" id="PS01033">
    <property type="entry name" value="GLOBIN"/>
    <property type="match status" value="1"/>
</dbReference>
<comment type="tissue specificity">
    <text>Red blood cells.</text>
</comment>
<comment type="PTM">
    <text evidence="3">The N-terminus of the mature protein is acetylated.</text>
</comment>
<comment type="similarity">
    <text evidence="1 2">Belongs to the globin family.</text>
</comment>
<organism evidence="5">
    <name type="scientific">Telmatobius peruvianus</name>
    <name type="common">Andean frog</name>
    <dbReference type="NCBI Taxonomy" id="170953"/>
    <lineage>
        <taxon>Eukaryota</taxon>
        <taxon>Metazoa</taxon>
        <taxon>Chordata</taxon>
        <taxon>Craniata</taxon>
        <taxon>Vertebrata</taxon>
        <taxon>Euteleostomi</taxon>
        <taxon>Amphibia</taxon>
        <taxon>Batrachia</taxon>
        <taxon>Anura</taxon>
        <taxon>Neobatrachia</taxon>
        <taxon>Hyloidea</taxon>
        <taxon>Ceratophryidae</taxon>
        <taxon>Telmatobiinae</taxon>
        <taxon>Telmatobius</taxon>
    </lineage>
</organism>
<accession>P83113</accession>
<sequence length="137" mass="15294">DDRSHILAIWPSVASHGADYGGEALYRLFLSNPQTKTYFPNFDFHKDSPQIKAHGKKVVDALTEASKHLDNINGALSKLFDLHAFELRVDPGNFPLLAHHINVTIAVMFPDDKFDIAHHQLDKFLAAVGGSLTSKYR</sequence>